<proteinExistence type="inferred from homology"/>
<name>RNH3_STRPM</name>
<keyword id="KW-0963">Cytoplasm</keyword>
<keyword id="KW-0255">Endonuclease</keyword>
<keyword id="KW-0378">Hydrolase</keyword>
<keyword id="KW-0460">Magnesium</keyword>
<keyword id="KW-0479">Metal-binding</keyword>
<keyword id="KW-0540">Nuclease</keyword>
<comment type="function">
    <text evidence="1">Endonuclease that specifically degrades the RNA of RNA-DNA hybrids.</text>
</comment>
<comment type="catalytic activity">
    <reaction evidence="1">
        <text>Endonucleolytic cleavage to 5'-phosphomonoester.</text>
        <dbReference type="EC" id="3.1.26.4"/>
    </reaction>
</comment>
<comment type="cofactor">
    <cofactor evidence="1">
        <name>Mn(2+)</name>
        <dbReference type="ChEBI" id="CHEBI:29035"/>
    </cofactor>
    <cofactor evidence="1">
        <name>Mg(2+)</name>
        <dbReference type="ChEBI" id="CHEBI:18420"/>
    </cofactor>
    <text evidence="1">Manganese or magnesium. Binds 1 divalent metal ion per monomer in the absence of substrate. May bind a second metal ion after substrate binding.</text>
</comment>
<comment type="subcellular location">
    <subcellularLocation>
        <location evidence="1">Cytoplasm</location>
    </subcellularLocation>
</comment>
<comment type="similarity">
    <text evidence="1">Belongs to the RNase HII family. RnhC subfamily.</text>
</comment>
<organism>
    <name type="scientific">Streptococcus pyogenes serotype M28 (strain MGAS6180)</name>
    <dbReference type="NCBI Taxonomy" id="319701"/>
    <lineage>
        <taxon>Bacteria</taxon>
        <taxon>Bacillati</taxon>
        <taxon>Bacillota</taxon>
        <taxon>Bacilli</taxon>
        <taxon>Lactobacillales</taxon>
        <taxon>Streptococcaceae</taxon>
        <taxon>Streptococcus</taxon>
    </lineage>
</organism>
<evidence type="ECO:0000255" key="1">
    <source>
        <dbReference type="HAMAP-Rule" id="MF_00053"/>
    </source>
</evidence>
<evidence type="ECO:0000255" key="2">
    <source>
        <dbReference type="PROSITE-ProRule" id="PRU01319"/>
    </source>
</evidence>
<protein>
    <recommendedName>
        <fullName evidence="1">Ribonuclease HIII</fullName>
        <shortName evidence="1">RNase HIII</shortName>
        <ecNumber evidence="1">3.1.26.4</ecNumber>
    </recommendedName>
</protein>
<feature type="chain" id="PRO_1000031248" description="Ribonuclease HIII">
    <location>
        <begin position="1"/>
        <end position="300"/>
    </location>
</feature>
<feature type="domain" description="RNase H type-2" evidence="2">
    <location>
        <begin position="83"/>
        <end position="300"/>
    </location>
</feature>
<feature type="binding site" evidence="1">
    <location>
        <position position="89"/>
    </location>
    <ligand>
        <name>a divalent metal cation</name>
        <dbReference type="ChEBI" id="CHEBI:60240"/>
    </ligand>
</feature>
<feature type="binding site" evidence="1">
    <location>
        <position position="90"/>
    </location>
    <ligand>
        <name>a divalent metal cation</name>
        <dbReference type="ChEBI" id="CHEBI:60240"/>
    </ligand>
</feature>
<feature type="binding site" evidence="1">
    <location>
        <position position="194"/>
    </location>
    <ligand>
        <name>a divalent metal cation</name>
        <dbReference type="ChEBI" id="CHEBI:60240"/>
    </ligand>
</feature>
<gene>
    <name evidence="1" type="primary">rnhC</name>
    <name type="ordered locus">M28_Spy1552</name>
</gene>
<accession>Q48RJ8</accession>
<sequence length="300" mass="32707">MNTLVLKIDAILSKHLKKQLAPYTISSQNIYVAFAAKKNGVTVLLYKSGKLVLQGNGANALAQELNLPVAKTVFEASNNSQDIPIIGSDEVGNGSYFGGIAVVASFVDPKDHPFLKKLGVDDSKKLSDKTIQQIAPLLEKQIPHQSLLLSPKKYNELVGKSKPYNTISIKVALHNQAIFLLLQKGIQPKQIVIDAFTSQSNYEKHLKKEKNHFPNPLTFQEKAESHYLAVAVSSIIARNLFLDNLDQLGQDLGYQLPSGAGSASDKVASQLLAAYGMSSLEYSAKLHFANTHKAQALLTK</sequence>
<dbReference type="EC" id="3.1.26.4" evidence="1"/>
<dbReference type="EMBL" id="CP000056">
    <property type="protein sequence ID" value="AAX72662.1"/>
    <property type="molecule type" value="Genomic_DNA"/>
</dbReference>
<dbReference type="RefSeq" id="WP_011285131.1">
    <property type="nucleotide sequence ID" value="NC_007296.2"/>
</dbReference>
<dbReference type="SMR" id="Q48RJ8"/>
<dbReference type="KEGG" id="spb:M28_Spy1552"/>
<dbReference type="HOGENOM" id="CLU_059546_1_0_9"/>
<dbReference type="GO" id="GO:0005737">
    <property type="term" value="C:cytoplasm"/>
    <property type="evidence" value="ECO:0007669"/>
    <property type="project" value="UniProtKB-SubCell"/>
</dbReference>
<dbReference type="GO" id="GO:0032299">
    <property type="term" value="C:ribonuclease H2 complex"/>
    <property type="evidence" value="ECO:0007669"/>
    <property type="project" value="TreeGrafter"/>
</dbReference>
<dbReference type="GO" id="GO:0000287">
    <property type="term" value="F:magnesium ion binding"/>
    <property type="evidence" value="ECO:0007669"/>
    <property type="project" value="UniProtKB-UniRule"/>
</dbReference>
<dbReference type="GO" id="GO:0003723">
    <property type="term" value="F:RNA binding"/>
    <property type="evidence" value="ECO:0007669"/>
    <property type="project" value="InterPro"/>
</dbReference>
<dbReference type="GO" id="GO:0004523">
    <property type="term" value="F:RNA-DNA hybrid ribonuclease activity"/>
    <property type="evidence" value="ECO:0007669"/>
    <property type="project" value="UniProtKB-UniRule"/>
</dbReference>
<dbReference type="GO" id="GO:0043137">
    <property type="term" value="P:DNA replication, removal of RNA primer"/>
    <property type="evidence" value="ECO:0007669"/>
    <property type="project" value="TreeGrafter"/>
</dbReference>
<dbReference type="GO" id="GO:0006298">
    <property type="term" value="P:mismatch repair"/>
    <property type="evidence" value="ECO:0007669"/>
    <property type="project" value="TreeGrafter"/>
</dbReference>
<dbReference type="CDD" id="cd06590">
    <property type="entry name" value="RNase_HII_bacteria_HIII_like"/>
    <property type="match status" value="1"/>
</dbReference>
<dbReference type="CDD" id="cd14796">
    <property type="entry name" value="RNAse_HIII_N"/>
    <property type="match status" value="1"/>
</dbReference>
<dbReference type="FunFam" id="3.30.420.10:FF:000047">
    <property type="entry name" value="Ribonuclease HIII"/>
    <property type="match status" value="1"/>
</dbReference>
<dbReference type="Gene3D" id="3.30.420.10">
    <property type="entry name" value="Ribonuclease H-like superfamily/Ribonuclease H"/>
    <property type="match status" value="1"/>
</dbReference>
<dbReference type="Gene3D" id="3.30.310.10">
    <property type="entry name" value="TATA-Binding Protein"/>
    <property type="match status" value="1"/>
</dbReference>
<dbReference type="HAMAP" id="MF_00053">
    <property type="entry name" value="RNase_HIII"/>
    <property type="match status" value="1"/>
</dbReference>
<dbReference type="InterPro" id="IPR001352">
    <property type="entry name" value="RNase_HII/HIII"/>
</dbReference>
<dbReference type="InterPro" id="IPR024567">
    <property type="entry name" value="RNase_HII/HIII_dom"/>
</dbReference>
<dbReference type="InterPro" id="IPR004641">
    <property type="entry name" value="RNase_HIII"/>
</dbReference>
<dbReference type="InterPro" id="IPR024568">
    <property type="entry name" value="RNase_HIII_N"/>
</dbReference>
<dbReference type="InterPro" id="IPR012337">
    <property type="entry name" value="RNaseH-like_sf"/>
</dbReference>
<dbReference type="InterPro" id="IPR036397">
    <property type="entry name" value="RNaseH_sf"/>
</dbReference>
<dbReference type="InterPro" id="IPR012295">
    <property type="entry name" value="TBP_dom_sf"/>
</dbReference>
<dbReference type="NCBIfam" id="TIGR00716">
    <property type="entry name" value="rnhC"/>
    <property type="match status" value="1"/>
</dbReference>
<dbReference type="PANTHER" id="PTHR10954:SF23">
    <property type="entry name" value="RIBONUCLEASE"/>
    <property type="match status" value="1"/>
</dbReference>
<dbReference type="PANTHER" id="PTHR10954">
    <property type="entry name" value="RIBONUCLEASE H2 SUBUNIT A"/>
    <property type="match status" value="1"/>
</dbReference>
<dbReference type="Pfam" id="PF11858">
    <property type="entry name" value="DUF3378"/>
    <property type="match status" value="1"/>
</dbReference>
<dbReference type="Pfam" id="PF01351">
    <property type="entry name" value="RNase_HII"/>
    <property type="match status" value="1"/>
</dbReference>
<dbReference type="PIRSF" id="PIRSF037748">
    <property type="entry name" value="RnhC"/>
    <property type="match status" value="1"/>
</dbReference>
<dbReference type="SUPFAM" id="SSF53098">
    <property type="entry name" value="Ribonuclease H-like"/>
    <property type="match status" value="1"/>
</dbReference>
<dbReference type="PROSITE" id="PS51975">
    <property type="entry name" value="RNASE_H_2"/>
    <property type="match status" value="1"/>
</dbReference>
<reference key="1">
    <citation type="journal article" date="2005" name="J. Infect. Dis.">
        <title>Genome sequence of a serotype M28 strain of group A Streptococcus: potential new insights into puerperal sepsis and bacterial disease specificity.</title>
        <authorList>
            <person name="Green N.M."/>
            <person name="Zhang S."/>
            <person name="Porcella S.F."/>
            <person name="Nagiec M.J."/>
            <person name="Barbian K.D."/>
            <person name="Beres S.B."/>
            <person name="Lefebvre R.B."/>
            <person name="Musser J.M."/>
        </authorList>
    </citation>
    <scope>NUCLEOTIDE SEQUENCE [LARGE SCALE GENOMIC DNA]</scope>
    <source>
        <strain>MGAS6180</strain>
    </source>
</reference>